<sequence>MANTIGKMFSVTSFGSSHGKAVGAVIDGCPANLELNTEDIQKELDKRKPGTSGVTTPRKEEDKVQILSGIFEGKTDGTPITGVVYNNNQHSKDYSMFKNTPRPSHGDYGWMSKYGNYDYNGGGRGSGRITIGHVIAGAIAKKLLKTKNIEIVSQVIQIGDIMAHSNDFDTVKENVEKNSVRCGDLEAAKAMEELILSKKQEGDSIGGIVETVAVGVPAGLGEPVFERLDGDLARILMNINAVKGVEIGFGFDVATSCASEINDEYYIEDNKIYTSTNSSGGIIGGISNGMPIISRIAVKPTPSISKCQKSVNLEKMEAEDITIQGRHDPCICPRATVVAQSSVAIVLADHMIRSGYIHPSNLEI</sequence>
<reference key="1">
    <citation type="journal article" date="2007" name="Proc. Natl. Acad. Sci. U.S.A.">
        <title>Genomic and metabolic adaptations of Methanobrevibacter smithii to the human gut.</title>
        <authorList>
            <person name="Samuel B.S."/>
            <person name="Hansen E.E."/>
            <person name="Manchester J.K."/>
            <person name="Coutinho P.M."/>
            <person name="Henrissat B."/>
            <person name="Fulton R."/>
            <person name="Latreille P."/>
            <person name="Kim K."/>
            <person name="Wilson R.K."/>
            <person name="Gordon J.I."/>
        </authorList>
    </citation>
    <scope>NUCLEOTIDE SEQUENCE [LARGE SCALE GENOMIC DNA]</scope>
    <source>
        <strain>ATCC 35061 / DSM 861 / OCM 144 / PS</strain>
    </source>
</reference>
<protein>
    <recommendedName>
        <fullName evidence="1">Chorismate synthase</fullName>
        <shortName evidence="1">CS</shortName>
        <ecNumber evidence="1">4.2.3.5</ecNumber>
    </recommendedName>
    <alternativeName>
        <fullName evidence="1">5-enolpyruvylshikimate-3-phosphate phospholyase</fullName>
    </alternativeName>
</protein>
<accession>A5UNA1</accession>
<dbReference type="EC" id="4.2.3.5" evidence="1"/>
<dbReference type="EMBL" id="CP000678">
    <property type="protein sequence ID" value="ABQ87679.1"/>
    <property type="molecule type" value="Genomic_DNA"/>
</dbReference>
<dbReference type="RefSeq" id="WP_011954535.1">
    <property type="nucleotide sequence ID" value="NZ_CP117965.1"/>
</dbReference>
<dbReference type="SMR" id="A5UNA1"/>
<dbReference type="STRING" id="420247.Msm_1474"/>
<dbReference type="EnsemblBacteria" id="ABQ87679">
    <property type="protein sequence ID" value="ABQ87679"/>
    <property type="gene ID" value="Msm_1474"/>
</dbReference>
<dbReference type="GeneID" id="78818121"/>
<dbReference type="KEGG" id="msi:Msm_1474"/>
<dbReference type="PATRIC" id="fig|420247.28.peg.1467"/>
<dbReference type="eggNOG" id="arCOG04133">
    <property type="taxonomic scope" value="Archaea"/>
</dbReference>
<dbReference type="HOGENOM" id="CLU_034547_0_2_2"/>
<dbReference type="UniPathway" id="UPA00053">
    <property type="reaction ID" value="UER00090"/>
</dbReference>
<dbReference type="Proteomes" id="UP000001992">
    <property type="component" value="Chromosome"/>
</dbReference>
<dbReference type="GO" id="GO:0005829">
    <property type="term" value="C:cytosol"/>
    <property type="evidence" value="ECO:0007669"/>
    <property type="project" value="TreeGrafter"/>
</dbReference>
<dbReference type="GO" id="GO:0004107">
    <property type="term" value="F:chorismate synthase activity"/>
    <property type="evidence" value="ECO:0007669"/>
    <property type="project" value="UniProtKB-UniRule"/>
</dbReference>
<dbReference type="GO" id="GO:0010181">
    <property type="term" value="F:FMN binding"/>
    <property type="evidence" value="ECO:0007669"/>
    <property type="project" value="TreeGrafter"/>
</dbReference>
<dbReference type="GO" id="GO:0008652">
    <property type="term" value="P:amino acid biosynthetic process"/>
    <property type="evidence" value="ECO:0007669"/>
    <property type="project" value="UniProtKB-KW"/>
</dbReference>
<dbReference type="GO" id="GO:0009073">
    <property type="term" value="P:aromatic amino acid family biosynthetic process"/>
    <property type="evidence" value="ECO:0007669"/>
    <property type="project" value="UniProtKB-KW"/>
</dbReference>
<dbReference type="GO" id="GO:0009423">
    <property type="term" value="P:chorismate biosynthetic process"/>
    <property type="evidence" value="ECO:0007669"/>
    <property type="project" value="UniProtKB-UniRule"/>
</dbReference>
<dbReference type="CDD" id="cd07304">
    <property type="entry name" value="Chorismate_synthase"/>
    <property type="match status" value="1"/>
</dbReference>
<dbReference type="Gene3D" id="3.60.150.10">
    <property type="entry name" value="Chorismate synthase AroC"/>
    <property type="match status" value="1"/>
</dbReference>
<dbReference type="HAMAP" id="MF_00300">
    <property type="entry name" value="Chorismate_synth"/>
    <property type="match status" value="1"/>
</dbReference>
<dbReference type="InterPro" id="IPR000453">
    <property type="entry name" value="Chorismate_synth"/>
</dbReference>
<dbReference type="InterPro" id="IPR035904">
    <property type="entry name" value="Chorismate_synth_AroC_sf"/>
</dbReference>
<dbReference type="InterPro" id="IPR020541">
    <property type="entry name" value="Chorismate_synthase_CS"/>
</dbReference>
<dbReference type="NCBIfam" id="TIGR00033">
    <property type="entry name" value="aroC"/>
    <property type="match status" value="1"/>
</dbReference>
<dbReference type="NCBIfam" id="NF003793">
    <property type="entry name" value="PRK05382.1"/>
    <property type="match status" value="1"/>
</dbReference>
<dbReference type="PANTHER" id="PTHR21085">
    <property type="entry name" value="CHORISMATE SYNTHASE"/>
    <property type="match status" value="1"/>
</dbReference>
<dbReference type="PANTHER" id="PTHR21085:SF0">
    <property type="entry name" value="CHORISMATE SYNTHASE"/>
    <property type="match status" value="1"/>
</dbReference>
<dbReference type="Pfam" id="PF01264">
    <property type="entry name" value="Chorismate_synt"/>
    <property type="match status" value="1"/>
</dbReference>
<dbReference type="PIRSF" id="PIRSF001456">
    <property type="entry name" value="Chorismate_synth"/>
    <property type="match status" value="1"/>
</dbReference>
<dbReference type="SUPFAM" id="SSF103263">
    <property type="entry name" value="Chorismate synthase, AroC"/>
    <property type="match status" value="1"/>
</dbReference>
<dbReference type="PROSITE" id="PS00787">
    <property type="entry name" value="CHORISMATE_SYNTHASE_1"/>
    <property type="match status" value="1"/>
</dbReference>
<dbReference type="PROSITE" id="PS00788">
    <property type="entry name" value="CHORISMATE_SYNTHASE_2"/>
    <property type="match status" value="1"/>
</dbReference>
<name>AROC_METS3</name>
<feature type="chain" id="PRO_1000022513" description="Chorismate synthase">
    <location>
        <begin position="1"/>
        <end position="364"/>
    </location>
</feature>
<feature type="binding site" evidence="1">
    <location>
        <position position="47"/>
    </location>
    <ligand>
        <name>NADP(+)</name>
        <dbReference type="ChEBI" id="CHEBI:58349"/>
    </ligand>
</feature>
<feature type="binding site" evidence="1">
    <location>
        <begin position="124"/>
        <end position="126"/>
    </location>
    <ligand>
        <name>FMN</name>
        <dbReference type="ChEBI" id="CHEBI:58210"/>
    </ligand>
</feature>
<feature type="binding site" evidence="1">
    <location>
        <begin position="240"/>
        <end position="241"/>
    </location>
    <ligand>
        <name>FMN</name>
        <dbReference type="ChEBI" id="CHEBI:58210"/>
    </ligand>
</feature>
<feature type="binding site" evidence="1">
    <location>
        <position position="284"/>
    </location>
    <ligand>
        <name>FMN</name>
        <dbReference type="ChEBI" id="CHEBI:58210"/>
    </ligand>
</feature>
<feature type="binding site" evidence="1">
    <location>
        <begin position="299"/>
        <end position="303"/>
    </location>
    <ligand>
        <name>FMN</name>
        <dbReference type="ChEBI" id="CHEBI:58210"/>
    </ligand>
</feature>
<feature type="binding site" evidence="1">
    <location>
        <position position="326"/>
    </location>
    <ligand>
        <name>FMN</name>
        <dbReference type="ChEBI" id="CHEBI:58210"/>
    </ligand>
</feature>
<gene>
    <name evidence="1" type="primary">aroC</name>
    <name type="ordered locus">Msm_1474</name>
</gene>
<comment type="function">
    <text evidence="1">Catalyzes the anti-1,4-elimination of the C-3 phosphate and the C-6 proR hydrogen from 5-enolpyruvylshikimate-3-phosphate (EPSP) to yield chorismate, which is the branch point compound that serves as the starting substrate for the three terminal pathways of aromatic amino acid biosynthesis. This reaction introduces a second double bond into the aromatic ring system.</text>
</comment>
<comment type="catalytic activity">
    <reaction evidence="1">
        <text>5-O-(1-carboxyvinyl)-3-phosphoshikimate = chorismate + phosphate</text>
        <dbReference type="Rhea" id="RHEA:21020"/>
        <dbReference type="ChEBI" id="CHEBI:29748"/>
        <dbReference type="ChEBI" id="CHEBI:43474"/>
        <dbReference type="ChEBI" id="CHEBI:57701"/>
        <dbReference type="EC" id="4.2.3.5"/>
    </reaction>
</comment>
<comment type="cofactor">
    <cofactor evidence="1">
        <name>FMNH2</name>
        <dbReference type="ChEBI" id="CHEBI:57618"/>
    </cofactor>
    <text evidence="1">Reduced FMN (FMNH(2)).</text>
</comment>
<comment type="pathway">
    <text evidence="1">Metabolic intermediate biosynthesis; chorismate biosynthesis; chorismate from D-erythrose 4-phosphate and phosphoenolpyruvate: step 7/7.</text>
</comment>
<comment type="similarity">
    <text evidence="1">Belongs to the chorismate synthase family.</text>
</comment>
<evidence type="ECO:0000255" key="1">
    <source>
        <dbReference type="HAMAP-Rule" id="MF_00300"/>
    </source>
</evidence>
<proteinExistence type="inferred from homology"/>
<organism>
    <name type="scientific">Methanobrevibacter smithii (strain ATCC 35061 / DSM 861 / OCM 144 / PS)</name>
    <dbReference type="NCBI Taxonomy" id="420247"/>
    <lineage>
        <taxon>Archaea</taxon>
        <taxon>Methanobacteriati</taxon>
        <taxon>Methanobacteriota</taxon>
        <taxon>Methanomada group</taxon>
        <taxon>Methanobacteria</taxon>
        <taxon>Methanobacteriales</taxon>
        <taxon>Methanobacteriaceae</taxon>
        <taxon>Methanobrevibacter</taxon>
    </lineage>
</organism>
<keyword id="KW-0028">Amino-acid biosynthesis</keyword>
<keyword id="KW-0057">Aromatic amino acid biosynthesis</keyword>
<keyword id="KW-0274">FAD</keyword>
<keyword id="KW-0285">Flavoprotein</keyword>
<keyword id="KW-0288">FMN</keyword>
<keyword id="KW-0456">Lyase</keyword>
<keyword id="KW-0521">NADP</keyword>